<organism>
    <name type="scientific">Psychromonas ingrahamii (strain DSM 17664 / CCUG 51855 / 37)</name>
    <dbReference type="NCBI Taxonomy" id="357804"/>
    <lineage>
        <taxon>Bacteria</taxon>
        <taxon>Pseudomonadati</taxon>
        <taxon>Pseudomonadota</taxon>
        <taxon>Gammaproteobacteria</taxon>
        <taxon>Alteromonadales</taxon>
        <taxon>Psychromonadaceae</taxon>
        <taxon>Psychromonas</taxon>
    </lineage>
</organism>
<evidence type="ECO:0000255" key="1">
    <source>
        <dbReference type="HAMAP-Rule" id="MF_00087"/>
    </source>
</evidence>
<reference key="1">
    <citation type="journal article" date="2008" name="BMC Genomics">
        <title>Genomics of an extreme psychrophile, Psychromonas ingrahamii.</title>
        <authorList>
            <person name="Riley M."/>
            <person name="Staley J.T."/>
            <person name="Danchin A."/>
            <person name="Wang T.Z."/>
            <person name="Brettin T.S."/>
            <person name="Hauser L.J."/>
            <person name="Land M.L."/>
            <person name="Thompson L.S."/>
        </authorList>
    </citation>
    <scope>NUCLEOTIDE SEQUENCE [LARGE SCALE GENOMIC DNA]</scope>
    <source>
        <strain>DSM 17664 / CCUG 51855 / 37</strain>
    </source>
</reference>
<name>HEM1_PSYIN</name>
<sequence>MPLFALGINHQTASVALREKVAFSADLLLDAYQALLAQPTVLEAVIVSTCNRTEIYCHLKQDNCDEVIKWLCSFHQIEDHKLRPSLYCYSEYQAIQHLFRVSCGLDSLVLGEPQILGQIKQAFATAKQAKGVDKIVQKWFQHTFTVAKRVRTETQIGANAISVAFAAVCLAKQIFSDLSQSRVLLIGAGETIELVGKYLIEHQVPNITIANRTLSRAMALVEQFDAQAITLGEIPNHLAQADIIISSTASPLPIIGKGMVERALKARRNRPMLFIDIAVPRDIEAEVSELRDIYLYSVDDLQGIIEENKQARQVAALEAEKIIDGCIVDFISWIESLKAVESIRTYRQNSEQLRDDLLNRASAALQNGEEAENVLKELAFKLTNKLIHHPSLALNETARSGNDDELILLRNALGLSKKD</sequence>
<feature type="chain" id="PRO_1000004678" description="Glutamyl-tRNA reductase">
    <location>
        <begin position="1"/>
        <end position="419"/>
    </location>
</feature>
<feature type="active site" description="Nucleophile" evidence="1">
    <location>
        <position position="50"/>
    </location>
</feature>
<feature type="binding site" evidence="1">
    <location>
        <begin position="49"/>
        <end position="52"/>
    </location>
    <ligand>
        <name>substrate</name>
    </ligand>
</feature>
<feature type="binding site" evidence="1">
    <location>
        <position position="107"/>
    </location>
    <ligand>
        <name>substrate</name>
    </ligand>
</feature>
<feature type="binding site" evidence="1">
    <location>
        <begin position="112"/>
        <end position="114"/>
    </location>
    <ligand>
        <name>substrate</name>
    </ligand>
</feature>
<feature type="binding site" evidence="1">
    <location>
        <position position="118"/>
    </location>
    <ligand>
        <name>substrate</name>
    </ligand>
</feature>
<feature type="binding site" evidence="1">
    <location>
        <begin position="187"/>
        <end position="192"/>
    </location>
    <ligand>
        <name>NADP(+)</name>
        <dbReference type="ChEBI" id="CHEBI:58349"/>
    </ligand>
</feature>
<feature type="site" description="Important for activity" evidence="1">
    <location>
        <position position="97"/>
    </location>
</feature>
<protein>
    <recommendedName>
        <fullName evidence="1">Glutamyl-tRNA reductase</fullName>
        <shortName evidence="1">GluTR</shortName>
        <ecNumber evidence="1">1.2.1.70</ecNumber>
    </recommendedName>
</protein>
<gene>
    <name evidence="1" type="primary">hemA</name>
    <name type="ordered locus">Ping_1606</name>
</gene>
<proteinExistence type="inferred from homology"/>
<dbReference type="EC" id="1.2.1.70" evidence="1"/>
<dbReference type="EMBL" id="CP000510">
    <property type="protein sequence ID" value="ABM03403.1"/>
    <property type="molecule type" value="Genomic_DNA"/>
</dbReference>
<dbReference type="RefSeq" id="WP_011769963.1">
    <property type="nucleotide sequence ID" value="NC_008709.1"/>
</dbReference>
<dbReference type="SMR" id="A1SV88"/>
<dbReference type="STRING" id="357804.Ping_1606"/>
<dbReference type="KEGG" id="pin:Ping_1606"/>
<dbReference type="eggNOG" id="COG0373">
    <property type="taxonomic scope" value="Bacteria"/>
</dbReference>
<dbReference type="HOGENOM" id="CLU_035113_2_2_6"/>
<dbReference type="OrthoDB" id="110209at2"/>
<dbReference type="UniPathway" id="UPA00251">
    <property type="reaction ID" value="UER00316"/>
</dbReference>
<dbReference type="Proteomes" id="UP000000639">
    <property type="component" value="Chromosome"/>
</dbReference>
<dbReference type="GO" id="GO:0008883">
    <property type="term" value="F:glutamyl-tRNA reductase activity"/>
    <property type="evidence" value="ECO:0007669"/>
    <property type="project" value="UniProtKB-UniRule"/>
</dbReference>
<dbReference type="GO" id="GO:0050661">
    <property type="term" value="F:NADP binding"/>
    <property type="evidence" value="ECO:0007669"/>
    <property type="project" value="InterPro"/>
</dbReference>
<dbReference type="GO" id="GO:0019353">
    <property type="term" value="P:protoporphyrinogen IX biosynthetic process from glutamate"/>
    <property type="evidence" value="ECO:0007669"/>
    <property type="project" value="TreeGrafter"/>
</dbReference>
<dbReference type="CDD" id="cd05213">
    <property type="entry name" value="NAD_bind_Glutamyl_tRNA_reduct"/>
    <property type="match status" value="1"/>
</dbReference>
<dbReference type="FunFam" id="3.30.460.30:FF:000001">
    <property type="entry name" value="Glutamyl-tRNA reductase"/>
    <property type="match status" value="1"/>
</dbReference>
<dbReference type="FunFam" id="3.40.50.720:FF:000031">
    <property type="entry name" value="Glutamyl-tRNA reductase"/>
    <property type="match status" value="1"/>
</dbReference>
<dbReference type="Gene3D" id="3.30.460.30">
    <property type="entry name" value="Glutamyl-tRNA reductase, N-terminal domain"/>
    <property type="match status" value="1"/>
</dbReference>
<dbReference type="Gene3D" id="3.40.50.720">
    <property type="entry name" value="NAD(P)-binding Rossmann-like Domain"/>
    <property type="match status" value="1"/>
</dbReference>
<dbReference type="HAMAP" id="MF_00087">
    <property type="entry name" value="Glu_tRNA_reductase"/>
    <property type="match status" value="1"/>
</dbReference>
<dbReference type="InterPro" id="IPR000343">
    <property type="entry name" value="4pyrrol_synth_GluRdtase"/>
</dbReference>
<dbReference type="InterPro" id="IPR015896">
    <property type="entry name" value="4pyrrol_synth_GluRdtase_dimer"/>
</dbReference>
<dbReference type="InterPro" id="IPR015895">
    <property type="entry name" value="4pyrrol_synth_GluRdtase_N"/>
</dbReference>
<dbReference type="InterPro" id="IPR018214">
    <property type="entry name" value="GluRdtase_CS"/>
</dbReference>
<dbReference type="InterPro" id="IPR036453">
    <property type="entry name" value="GluRdtase_dimer_dom_sf"/>
</dbReference>
<dbReference type="InterPro" id="IPR036343">
    <property type="entry name" value="GluRdtase_N_sf"/>
</dbReference>
<dbReference type="InterPro" id="IPR036291">
    <property type="entry name" value="NAD(P)-bd_dom_sf"/>
</dbReference>
<dbReference type="InterPro" id="IPR006151">
    <property type="entry name" value="Shikm_DH/Glu-tRNA_Rdtase"/>
</dbReference>
<dbReference type="NCBIfam" id="TIGR01035">
    <property type="entry name" value="hemA"/>
    <property type="match status" value="1"/>
</dbReference>
<dbReference type="PANTHER" id="PTHR43013">
    <property type="entry name" value="GLUTAMYL-TRNA REDUCTASE"/>
    <property type="match status" value="1"/>
</dbReference>
<dbReference type="PANTHER" id="PTHR43013:SF1">
    <property type="entry name" value="GLUTAMYL-TRNA REDUCTASE"/>
    <property type="match status" value="1"/>
</dbReference>
<dbReference type="Pfam" id="PF00745">
    <property type="entry name" value="GlutR_dimer"/>
    <property type="match status" value="1"/>
</dbReference>
<dbReference type="Pfam" id="PF05201">
    <property type="entry name" value="GlutR_N"/>
    <property type="match status" value="1"/>
</dbReference>
<dbReference type="Pfam" id="PF01488">
    <property type="entry name" value="Shikimate_DH"/>
    <property type="match status" value="1"/>
</dbReference>
<dbReference type="PIRSF" id="PIRSF000445">
    <property type="entry name" value="4pyrrol_synth_GluRdtase"/>
    <property type="match status" value="1"/>
</dbReference>
<dbReference type="SUPFAM" id="SSF69742">
    <property type="entry name" value="Glutamyl tRNA-reductase catalytic, N-terminal domain"/>
    <property type="match status" value="1"/>
</dbReference>
<dbReference type="SUPFAM" id="SSF69075">
    <property type="entry name" value="Glutamyl tRNA-reductase dimerization domain"/>
    <property type="match status" value="1"/>
</dbReference>
<dbReference type="SUPFAM" id="SSF51735">
    <property type="entry name" value="NAD(P)-binding Rossmann-fold domains"/>
    <property type="match status" value="1"/>
</dbReference>
<dbReference type="PROSITE" id="PS00747">
    <property type="entry name" value="GLUTR"/>
    <property type="match status" value="1"/>
</dbReference>
<comment type="function">
    <text evidence="1">Catalyzes the NADPH-dependent reduction of glutamyl-tRNA(Glu) to glutamate 1-semialdehyde (GSA).</text>
</comment>
<comment type="catalytic activity">
    <reaction evidence="1">
        <text>(S)-4-amino-5-oxopentanoate + tRNA(Glu) + NADP(+) = L-glutamyl-tRNA(Glu) + NADPH + H(+)</text>
        <dbReference type="Rhea" id="RHEA:12344"/>
        <dbReference type="Rhea" id="RHEA-COMP:9663"/>
        <dbReference type="Rhea" id="RHEA-COMP:9680"/>
        <dbReference type="ChEBI" id="CHEBI:15378"/>
        <dbReference type="ChEBI" id="CHEBI:57501"/>
        <dbReference type="ChEBI" id="CHEBI:57783"/>
        <dbReference type="ChEBI" id="CHEBI:58349"/>
        <dbReference type="ChEBI" id="CHEBI:78442"/>
        <dbReference type="ChEBI" id="CHEBI:78520"/>
        <dbReference type="EC" id="1.2.1.70"/>
    </reaction>
</comment>
<comment type="pathway">
    <text evidence="1">Porphyrin-containing compound metabolism; protoporphyrin-IX biosynthesis; 5-aminolevulinate from L-glutamyl-tRNA(Glu): step 1/2.</text>
</comment>
<comment type="subunit">
    <text evidence="1">Homodimer.</text>
</comment>
<comment type="domain">
    <text evidence="1">Possesses an unusual extended V-shaped dimeric structure with each monomer consisting of three distinct domains arranged along a curved 'spinal' alpha-helix. The N-terminal catalytic domain specifically recognizes the glutamate moiety of the substrate. The second domain is the NADPH-binding domain, and the third C-terminal domain is responsible for dimerization.</text>
</comment>
<comment type="miscellaneous">
    <text evidence="1">During catalysis, the active site Cys acts as a nucleophile attacking the alpha-carbonyl group of tRNA-bound glutamate with the formation of a thioester intermediate between enzyme and glutamate, and the concomitant release of tRNA(Glu). The thioester intermediate is finally reduced by direct hydride transfer from NADPH, to form the product GSA.</text>
</comment>
<comment type="similarity">
    <text evidence="1">Belongs to the glutamyl-tRNA reductase family.</text>
</comment>
<accession>A1SV88</accession>
<keyword id="KW-0521">NADP</keyword>
<keyword id="KW-0560">Oxidoreductase</keyword>
<keyword id="KW-0627">Porphyrin biosynthesis</keyword>
<keyword id="KW-1185">Reference proteome</keyword>